<protein>
    <recommendedName>
        <fullName evidence="1">Adenylosuccinate synthetase</fullName>
        <shortName evidence="1">AMPSase</shortName>
        <shortName evidence="1">AdSS</shortName>
        <ecNumber evidence="1">6.3.4.4</ecNumber>
    </recommendedName>
    <alternativeName>
        <fullName evidence="1">IMP--aspartate ligase</fullName>
    </alternativeName>
</protein>
<organism>
    <name type="scientific">Clostridioides difficile (strain 630)</name>
    <name type="common">Peptoclostridium difficile</name>
    <dbReference type="NCBI Taxonomy" id="272563"/>
    <lineage>
        <taxon>Bacteria</taxon>
        <taxon>Bacillati</taxon>
        <taxon>Bacillota</taxon>
        <taxon>Clostridia</taxon>
        <taxon>Peptostreptococcales</taxon>
        <taxon>Peptostreptococcaceae</taxon>
        <taxon>Clostridioides</taxon>
    </lineage>
</organism>
<keyword id="KW-0963">Cytoplasm</keyword>
<keyword id="KW-0342">GTP-binding</keyword>
<keyword id="KW-0436">Ligase</keyword>
<keyword id="KW-0460">Magnesium</keyword>
<keyword id="KW-0479">Metal-binding</keyword>
<keyword id="KW-0547">Nucleotide-binding</keyword>
<keyword id="KW-0658">Purine biosynthesis</keyword>
<keyword id="KW-1185">Reference proteome</keyword>
<reference key="1">
    <citation type="journal article" date="2006" name="Nat. Genet.">
        <title>The multidrug-resistant human pathogen Clostridium difficile has a highly mobile, mosaic genome.</title>
        <authorList>
            <person name="Sebaihia M."/>
            <person name="Wren B.W."/>
            <person name="Mullany P."/>
            <person name="Fairweather N.F."/>
            <person name="Minton N."/>
            <person name="Stabler R."/>
            <person name="Thomson N.R."/>
            <person name="Roberts A.P."/>
            <person name="Cerdeno-Tarraga A.M."/>
            <person name="Wang H."/>
            <person name="Holden M.T.G."/>
            <person name="Wright A."/>
            <person name="Churcher C."/>
            <person name="Quail M.A."/>
            <person name="Baker S."/>
            <person name="Bason N."/>
            <person name="Brooks K."/>
            <person name="Chillingworth T."/>
            <person name="Cronin A."/>
            <person name="Davis P."/>
            <person name="Dowd L."/>
            <person name="Fraser A."/>
            <person name="Feltwell T."/>
            <person name="Hance Z."/>
            <person name="Holroyd S."/>
            <person name="Jagels K."/>
            <person name="Moule S."/>
            <person name="Mungall K."/>
            <person name="Price C."/>
            <person name="Rabbinowitsch E."/>
            <person name="Sharp S."/>
            <person name="Simmonds M."/>
            <person name="Stevens K."/>
            <person name="Unwin L."/>
            <person name="Whithead S."/>
            <person name="Dupuy B."/>
            <person name="Dougan G."/>
            <person name="Barrell B."/>
            <person name="Parkhill J."/>
        </authorList>
    </citation>
    <scope>NUCLEOTIDE SEQUENCE [LARGE SCALE GENOMIC DNA]</scope>
    <source>
        <strain>630</strain>
    </source>
</reference>
<gene>
    <name evidence="1" type="primary">purA</name>
    <name type="ordered locus">CD630_36550</name>
</gene>
<comment type="function">
    <text evidence="1">Plays an important role in the de novo pathway of purine nucleotide biosynthesis. Catalyzes the first committed step in the biosynthesis of AMP from IMP.</text>
</comment>
<comment type="catalytic activity">
    <reaction evidence="1">
        <text>IMP + L-aspartate + GTP = N(6)-(1,2-dicarboxyethyl)-AMP + GDP + phosphate + 2 H(+)</text>
        <dbReference type="Rhea" id="RHEA:15753"/>
        <dbReference type="ChEBI" id="CHEBI:15378"/>
        <dbReference type="ChEBI" id="CHEBI:29991"/>
        <dbReference type="ChEBI" id="CHEBI:37565"/>
        <dbReference type="ChEBI" id="CHEBI:43474"/>
        <dbReference type="ChEBI" id="CHEBI:57567"/>
        <dbReference type="ChEBI" id="CHEBI:58053"/>
        <dbReference type="ChEBI" id="CHEBI:58189"/>
        <dbReference type="EC" id="6.3.4.4"/>
    </reaction>
</comment>
<comment type="cofactor">
    <cofactor evidence="1">
        <name>Mg(2+)</name>
        <dbReference type="ChEBI" id="CHEBI:18420"/>
    </cofactor>
    <text evidence="1">Binds 1 Mg(2+) ion per subunit.</text>
</comment>
<comment type="pathway">
    <text evidence="1">Purine metabolism; AMP biosynthesis via de novo pathway; AMP from IMP: step 1/2.</text>
</comment>
<comment type="subunit">
    <text evidence="1">Homodimer.</text>
</comment>
<comment type="subcellular location">
    <subcellularLocation>
        <location evidence="1">Cytoplasm</location>
    </subcellularLocation>
</comment>
<comment type="similarity">
    <text evidence="1">Belongs to the adenylosuccinate synthetase family.</text>
</comment>
<name>PURA_CLOD6</name>
<sequence>MKTVAIVGSQWGDEGKGKVIDYLATQADVVVRGQGGNNAGHTLVVEGKKYALHLIPSGVLNPNTVNIIGNGIVFDPKGFLEELEMFKTDNISTENIKISDRAHVIFPYHKELDALSEEARGDLKIGTTKKGIGPCYMDKTERSGIRICDLMDKDKFAIKLKAQIDAKNEIVKNIYGKEELFDFETIYNEYLGYAEQIRKYVADTSVIVYDAVRAGKKVLFEGAQGTLLDLDLGTYPFVTSSHPTSGGFAIGAGIGPNMIKDVVGIVKAYTTRVGEGPFVTEQINETGDKIREQGHEFGVTTGRPRRCGWFDAVIVKYAARVNGLTSISFMLLDVLTGFDKIKVCTSYKMGDKIITDFPASLDDLAKCEPVYEELDGWNEDITQIDNFDDLPENAKKYVAKIEELVGVSVDMVSVGPNRAQTIIRRNIFA</sequence>
<evidence type="ECO:0000255" key="1">
    <source>
        <dbReference type="HAMAP-Rule" id="MF_00011"/>
    </source>
</evidence>
<accession>Q181Q7</accession>
<dbReference type="EC" id="6.3.4.4" evidence="1"/>
<dbReference type="EMBL" id="AM180355">
    <property type="protein sequence ID" value="CAJ70563.1"/>
    <property type="molecule type" value="Genomic_DNA"/>
</dbReference>
<dbReference type="RefSeq" id="WP_003434259.1">
    <property type="nucleotide sequence ID" value="NZ_JAUPES010000007.1"/>
</dbReference>
<dbReference type="RefSeq" id="YP_001090179.1">
    <property type="nucleotide sequence ID" value="NC_009089.1"/>
</dbReference>
<dbReference type="SMR" id="Q181Q7"/>
<dbReference type="STRING" id="272563.CD630_36550"/>
<dbReference type="EnsemblBacteria" id="CAJ70563">
    <property type="protein sequence ID" value="CAJ70563"/>
    <property type="gene ID" value="CD630_36550"/>
</dbReference>
<dbReference type="KEGG" id="cdf:CD630_36550"/>
<dbReference type="KEGG" id="pdc:CDIF630_03983"/>
<dbReference type="PATRIC" id="fig|272563.120.peg.3865"/>
<dbReference type="eggNOG" id="COG0104">
    <property type="taxonomic scope" value="Bacteria"/>
</dbReference>
<dbReference type="OrthoDB" id="9807553at2"/>
<dbReference type="PhylomeDB" id="Q181Q7"/>
<dbReference type="BioCyc" id="PDIF272563:G12WB-3846-MONOMER"/>
<dbReference type="UniPathway" id="UPA00075">
    <property type="reaction ID" value="UER00335"/>
</dbReference>
<dbReference type="Proteomes" id="UP000001978">
    <property type="component" value="Chromosome"/>
</dbReference>
<dbReference type="GO" id="GO:0005737">
    <property type="term" value="C:cytoplasm"/>
    <property type="evidence" value="ECO:0007669"/>
    <property type="project" value="UniProtKB-SubCell"/>
</dbReference>
<dbReference type="GO" id="GO:0004019">
    <property type="term" value="F:adenylosuccinate synthase activity"/>
    <property type="evidence" value="ECO:0007669"/>
    <property type="project" value="UniProtKB-UniRule"/>
</dbReference>
<dbReference type="GO" id="GO:0005525">
    <property type="term" value="F:GTP binding"/>
    <property type="evidence" value="ECO:0007669"/>
    <property type="project" value="UniProtKB-UniRule"/>
</dbReference>
<dbReference type="GO" id="GO:0000287">
    <property type="term" value="F:magnesium ion binding"/>
    <property type="evidence" value="ECO:0007669"/>
    <property type="project" value="UniProtKB-UniRule"/>
</dbReference>
<dbReference type="GO" id="GO:0044208">
    <property type="term" value="P:'de novo' AMP biosynthetic process"/>
    <property type="evidence" value="ECO:0007669"/>
    <property type="project" value="UniProtKB-UniRule"/>
</dbReference>
<dbReference type="GO" id="GO:0046040">
    <property type="term" value="P:IMP metabolic process"/>
    <property type="evidence" value="ECO:0007669"/>
    <property type="project" value="TreeGrafter"/>
</dbReference>
<dbReference type="CDD" id="cd03108">
    <property type="entry name" value="AdSS"/>
    <property type="match status" value="1"/>
</dbReference>
<dbReference type="FunFam" id="1.10.300.10:FF:000001">
    <property type="entry name" value="Adenylosuccinate synthetase"/>
    <property type="match status" value="1"/>
</dbReference>
<dbReference type="FunFam" id="3.90.170.10:FF:000001">
    <property type="entry name" value="Adenylosuccinate synthetase"/>
    <property type="match status" value="1"/>
</dbReference>
<dbReference type="Gene3D" id="3.40.440.10">
    <property type="entry name" value="Adenylosuccinate Synthetase, subunit A, domain 1"/>
    <property type="match status" value="1"/>
</dbReference>
<dbReference type="Gene3D" id="1.10.300.10">
    <property type="entry name" value="Adenylosuccinate Synthetase, subunit A, domain 2"/>
    <property type="match status" value="1"/>
</dbReference>
<dbReference type="Gene3D" id="3.90.170.10">
    <property type="entry name" value="Adenylosuccinate Synthetase, subunit A, domain 3"/>
    <property type="match status" value="1"/>
</dbReference>
<dbReference type="HAMAP" id="MF_00011">
    <property type="entry name" value="Adenylosucc_synth"/>
    <property type="match status" value="1"/>
</dbReference>
<dbReference type="InterPro" id="IPR018220">
    <property type="entry name" value="Adenylosuccin_syn_GTP-bd"/>
</dbReference>
<dbReference type="InterPro" id="IPR033128">
    <property type="entry name" value="Adenylosuccin_syn_Lys_AS"/>
</dbReference>
<dbReference type="InterPro" id="IPR042109">
    <property type="entry name" value="Adenylosuccinate_synth_dom1"/>
</dbReference>
<dbReference type="InterPro" id="IPR042110">
    <property type="entry name" value="Adenylosuccinate_synth_dom2"/>
</dbReference>
<dbReference type="InterPro" id="IPR042111">
    <property type="entry name" value="Adenylosuccinate_synth_dom3"/>
</dbReference>
<dbReference type="InterPro" id="IPR001114">
    <property type="entry name" value="Adenylosuccinate_synthetase"/>
</dbReference>
<dbReference type="InterPro" id="IPR027417">
    <property type="entry name" value="P-loop_NTPase"/>
</dbReference>
<dbReference type="NCBIfam" id="NF002223">
    <property type="entry name" value="PRK01117.1"/>
    <property type="match status" value="1"/>
</dbReference>
<dbReference type="NCBIfam" id="TIGR00184">
    <property type="entry name" value="purA"/>
    <property type="match status" value="1"/>
</dbReference>
<dbReference type="PANTHER" id="PTHR11846">
    <property type="entry name" value="ADENYLOSUCCINATE SYNTHETASE"/>
    <property type="match status" value="1"/>
</dbReference>
<dbReference type="PANTHER" id="PTHR11846:SF0">
    <property type="entry name" value="ADENYLOSUCCINATE SYNTHETASE"/>
    <property type="match status" value="1"/>
</dbReference>
<dbReference type="Pfam" id="PF00709">
    <property type="entry name" value="Adenylsucc_synt"/>
    <property type="match status" value="1"/>
</dbReference>
<dbReference type="SMART" id="SM00788">
    <property type="entry name" value="Adenylsucc_synt"/>
    <property type="match status" value="1"/>
</dbReference>
<dbReference type="SUPFAM" id="SSF52540">
    <property type="entry name" value="P-loop containing nucleoside triphosphate hydrolases"/>
    <property type="match status" value="1"/>
</dbReference>
<dbReference type="PROSITE" id="PS01266">
    <property type="entry name" value="ADENYLOSUCCIN_SYN_1"/>
    <property type="match status" value="1"/>
</dbReference>
<dbReference type="PROSITE" id="PS00513">
    <property type="entry name" value="ADENYLOSUCCIN_SYN_2"/>
    <property type="match status" value="1"/>
</dbReference>
<proteinExistence type="inferred from homology"/>
<feature type="chain" id="PRO_1000000805" description="Adenylosuccinate synthetase">
    <location>
        <begin position="1"/>
        <end position="429"/>
    </location>
</feature>
<feature type="active site" description="Proton acceptor" evidence="1">
    <location>
        <position position="13"/>
    </location>
</feature>
<feature type="active site" description="Proton donor" evidence="1">
    <location>
        <position position="41"/>
    </location>
</feature>
<feature type="binding site" evidence="1">
    <location>
        <begin position="12"/>
        <end position="18"/>
    </location>
    <ligand>
        <name>GTP</name>
        <dbReference type="ChEBI" id="CHEBI:37565"/>
    </ligand>
</feature>
<feature type="binding site" description="in other chain" evidence="1">
    <location>
        <begin position="13"/>
        <end position="16"/>
    </location>
    <ligand>
        <name>IMP</name>
        <dbReference type="ChEBI" id="CHEBI:58053"/>
        <note>ligand shared between dimeric partners</note>
    </ligand>
</feature>
<feature type="binding site" evidence="1">
    <location>
        <position position="13"/>
    </location>
    <ligand>
        <name>Mg(2+)</name>
        <dbReference type="ChEBI" id="CHEBI:18420"/>
    </ligand>
</feature>
<feature type="binding site" description="in other chain" evidence="1">
    <location>
        <begin position="38"/>
        <end position="41"/>
    </location>
    <ligand>
        <name>IMP</name>
        <dbReference type="ChEBI" id="CHEBI:58053"/>
        <note>ligand shared between dimeric partners</note>
    </ligand>
</feature>
<feature type="binding site" evidence="1">
    <location>
        <begin position="40"/>
        <end position="42"/>
    </location>
    <ligand>
        <name>GTP</name>
        <dbReference type="ChEBI" id="CHEBI:37565"/>
    </ligand>
</feature>
<feature type="binding site" evidence="1">
    <location>
        <position position="40"/>
    </location>
    <ligand>
        <name>Mg(2+)</name>
        <dbReference type="ChEBI" id="CHEBI:18420"/>
    </ligand>
</feature>
<feature type="binding site" description="in other chain" evidence="1">
    <location>
        <position position="128"/>
    </location>
    <ligand>
        <name>IMP</name>
        <dbReference type="ChEBI" id="CHEBI:58053"/>
        <note>ligand shared between dimeric partners</note>
    </ligand>
</feature>
<feature type="binding site" evidence="1">
    <location>
        <position position="142"/>
    </location>
    <ligand>
        <name>IMP</name>
        <dbReference type="ChEBI" id="CHEBI:58053"/>
        <note>ligand shared between dimeric partners</note>
    </ligand>
</feature>
<feature type="binding site" description="in other chain" evidence="1">
    <location>
        <position position="224"/>
    </location>
    <ligand>
        <name>IMP</name>
        <dbReference type="ChEBI" id="CHEBI:58053"/>
        <note>ligand shared between dimeric partners</note>
    </ligand>
</feature>
<feature type="binding site" description="in other chain" evidence="1">
    <location>
        <position position="239"/>
    </location>
    <ligand>
        <name>IMP</name>
        <dbReference type="ChEBI" id="CHEBI:58053"/>
        <note>ligand shared between dimeric partners</note>
    </ligand>
</feature>
<feature type="binding site" evidence="1">
    <location>
        <begin position="299"/>
        <end position="305"/>
    </location>
    <ligand>
        <name>substrate</name>
    </ligand>
</feature>
<feature type="binding site" description="in other chain" evidence="1">
    <location>
        <position position="303"/>
    </location>
    <ligand>
        <name>IMP</name>
        <dbReference type="ChEBI" id="CHEBI:58053"/>
        <note>ligand shared between dimeric partners</note>
    </ligand>
</feature>
<feature type="binding site" evidence="1">
    <location>
        <position position="305"/>
    </location>
    <ligand>
        <name>GTP</name>
        <dbReference type="ChEBI" id="CHEBI:37565"/>
    </ligand>
</feature>
<feature type="binding site" evidence="1">
    <location>
        <begin position="331"/>
        <end position="333"/>
    </location>
    <ligand>
        <name>GTP</name>
        <dbReference type="ChEBI" id="CHEBI:37565"/>
    </ligand>
</feature>
<feature type="binding site" evidence="1">
    <location>
        <begin position="413"/>
        <end position="415"/>
    </location>
    <ligand>
        <name>GTP</name>
        <dbReference type="ChEBI" id="CHEBI:37565"/>
    </ligand>
</feature>